<comment type="function">
    <text evidence="3 4">Required for cell fusion events during development including the fusion of anchor cells (AC), vulval A and vulval D rings, and late epidermal seam cells (PubMed:17488621). Required for amphid sheath cell fusion induced by entry into dauer stage (PubMed:21350017).</text>
</comment>
<comment type="subcellular location">
    <subcellularLocation>
        <location evidence="3">Cell membrane</location>
        <topology evidence="1">Single-pass type I membrane protein</topology>
    </subcellularLocation>
    <subcellularLocation>
        <location evidence="4">Apical cell membrane</location>
    </subcellularLocation>
</comment>
<comment type="tissue specificity">
    <text evidence="4">Expressed in amphid sheath cells.</text>
</comment>
<comment type="developmental stage">
    <text evidence="3">First expressed in embryonic hyp5 cells and then during larval development in pharyngeal muscles, uterine rings, head and tail neurons, sheath cells of chemo-sensory neurons, and in male neurons. Expressed in AC, vulval D rings and uterine seam cells in cell fusion events during development.</text>
</comment>
<comment type="disruption phenotype">
    <text evidence="3 4">Egg laying defective phenotype. AC fail to fuse in the majority of worms (PubMed:17488621). RNAi-mediated knockdown in a daf-7 e1372 mutant background causes a severe defect in amphid sheath cell fusion induced by entry into dauer stage (PubMed:21350017).</text>
</comment>
<comment type="similarity">
    <text evidence="5">Belongs to the EFF/AFF cell fusogen family.</text>
</comment>
<organism>
    <name type="scientific">Caenorhabditis elegans</name>
    <dbReference type="NCBI Taxonomy" id="6239"/>
    <lineage>
        <taxon>Eukaryota</taxon>
        <taxon>Metazoa</taxon>
        <taxon>Ecdysozoa</taxon>
        <taxon>Nematoda</taxon>
        <taxon>Chromadorea</taxon>
        <taxon>Rhabditida</taxon>
        <taxon>Rhabditina</taxon>
        <taxon>Rhabditomorpha</taxon>
        <taxon>Rhabditoidea</taxon>
        <taxon>Rhabditidae</taxon>
        <taxon>Peloderinae</taxon>
        <taxon>Caenorhabditis</taxon>
    </lineage>
</organism>
<evidence type="ECO:0000255" key="1"/>
<evidence type="ECO:0000255" key="2">
    <source>
        <dbReference type="PROSITE-ProRule" id="PRU00498"/>
    </source>
</evidence>
<evidence type="ECO:0000269" key="3">
    <source>
    </source>
</evidence>
<evidence type="ECO:0000269" key="4">
    <source>
    </source>
</evidence>
<evidence type="ECO:0000305" key="5"/>
<evidence type="ECO:0000305" key="6">
    <source>
    </source>
</evidence>
<evidence type="ECO:0000312" key="7">
    <source>
        <dbReference type="EMBL" id="ABP04049.1"/>
    </source>
</evidence>
<evidence type="ECO:0000312" key="8">
    <source>
        <dbReference type="EMBL" id="CCD61566.1"/>
    </source>
</evidence>
<evidence type="ECO:0000312" key="9">
    <source>
        <dbReference type="WormBase" id="C44B7.3"/>
    </source>
</evidence>
<gene>
    <name evidence="9" type="primary">aff-1</name>
    <name evidence="9" type="ORF">C44B7.3</name>
</gene>
<keyword id="KW-1003">Cell membrane</keyword>
<keyword id="KW-0217">Developmental protein</keyword>
<keyword id="KW-0325">Glycoprotein</keyword>
<keyword id="KW-0472">Membrane</keyword>
<keyword id="KW-1185">Reference proteome</keyword>
<keyword id="KW-0732">Signal</keyword>
<keyword id="KW-0812">Transmembrane</keyword>
<keyword id="KW-1133">Transmembrane helix</keyword>
<dbReference type="EMBL" id="EF205023">
    <property type="protein sequence ID" value="ABP04049.1"/>
    <property type="molecule type" value="mRNA"/>
</dbReference>
<dbReference type="EMBL" id="FO080141">
    <property type="protein sequence ID" value="CCD61566.1"/>
    <property type="molecule type" value="Genomic_DNA"/>
</dbReference>
<dbReference type="RefSeq" id="NP_495402.3">
    <property type="nucleotide sequence ID" value="NM_063001.5"/>
</dbReference>
<dbReference type="SMR" id="G5EGL9"/>
<dbReference type="FunCoup" id="G5EGL9">
    <property type="interactions" value="87"/>
</dbReference>
<dbReference type="STRING" id="6239.C44B7.3.1"/>
<dbReference type="TCDB" id="1.N.4.1.4">
    <property type="family name" value="the ff fusogen (fff) family"/>
</dbReference>
<dbReference type="GlyCosmos" id="G5EGL9">
    <property type="glycosylation" value="7 sites, No reported glycans"/>
</dbReference>
<dbReference type="PaxDb" id="6239-C44B7.3"/>
<dbReference type="EnsemblMetazoa" id="C44B7.3.1">
    <property type="protein sequence ID" value="C44B7.3.1"/>
    <property type="gene ID" value="WBGene00016625"/>
</dbReference>
<dbReference type="GeneID" id="174123"/>
<dbReference type="KEGG" id="cel:CELE_C44B7.3"/>
<dbReference type="AGR" id="WB:WBGene00016625"/>
<dbReference type="CTD" id="174123"/>
<dbReference type="WormBase" id="C44B7.3">
    <property type="protein sequence ID" value="CE41369"/>
    <property type="gene ID" value="WBGene00016625"/>
    <property type="gene designation" value="aff-1"/>
</dbReference>
<dbReference type="eggNOG" id="ENOG502RRTU">
    <property type="taxonomic scope" value="Eukaryota"/>
</dbReference>
<dbReference type="GeneTree" id="ENSGT00970000196161"/>
<dbReference type="HOGENOM" id="CLU_463248_0_0_1"/>
<dbReference type="InParanoid" id="G5EGL9"/>
<dbReference type="OMA" id="WQLKEGM"/>
<dbReference type="OrthoDB" id="5916841at2759"/>
<dbReference type="PhylomeDB" id="G5EGL9"/>
<dbReference type="PRO" id="PR:G5EGL9"/>
<dbReference type="Proteomes" id="UP000001940">
    <property type="component" value="Chromosome II"/>
</dbReference>
<dbReference type="Bgee" id="WBGene00016625">
    <property type="expression patterns" value="Expressed in pharyngeal muscle cell (C elegans) and 3 other cell types or tissues"/>
</dbReference>
<dbReference type="GO" id="GO:0016324">
    <property type="term" value="C:apical plasma membrane"/>
    <property type="evidence" value="ECO:0007669"/>
    <property type="project" value="UniProtKB-SubCell"/>
</dbReference>
<dbReference type="GO" id="GO:0044291">
    <property type="term" value="C:cell-cell contact zone"/>
    <property type="evidence" value="ECO:0000318"/>
    <property type="project" value="GO_Central"/>
</dbReference>
<dbReference type="GO" id="GO:0043229">
    <property type="term" value="C:intracellular organelle"/>
    <property type="evidence" value="ECO:0000314"/>
    <property type="project" value="WormBase"/>
</dbReference>
<dbReference type="GO" id="GO:0005886">
    <property type="term" value="C:plasma membrane"/>
    <property type="evidence" value="ECO:0000314"/>
    <property type="project" value="WormBase"/>
</dbReference>
<dbReference type="GO" id="GO:0046662">
    <property type="term" value="P:regulation of egg-laying behavior"/>
    <property type="evidence" value="ECO:0000315"/>
    <property type="project" value="WormBase"/>
</dbReference>
<dbReference type="GO" id="GO:0000768">
    <property type="term" value="P:syncytium formation by plasma membrane fusion"/>
    <property type="evidence" value="ECO:0000315"/>
    <property type="project" value="WormBase"/>
</dbReference>
<dbReference type="Gene3D" id="2.60.40.3980">
    <property type="entry name" value="Cell-cell fusogen EFF/AFF, domain 3"/>
    <property type="match status" value="1"/>
</dbReference>
<dbReference type="InterPro" id="IPR029213">
    <property type="entry name" value="Fusogen_EFF/AFF"/>
</dbReference>
<dbReference type="InterPro" id="IPR043076">
    <property type="entry name" value="Fusogen_EFF/AFF_dom3"/>
</dbReference>
<dbReference type="PANTHER" id="PTHR37415:SF1">
    <property type="entry name" value="CELL FUSION PROTEIN AFF-1"/>
    <property type="match status" value="1"/>
</dbReference>
<dbReference type="PANTHER" id="PTHR37415">
    <property type="entry name" value="EFF-1A"/>
    <property type="match status" value="1"/>
</dbReference>
<dbReference type="Pfam" id="PF14884">
    <property type="entry name" value="EFF-AFF"/>
    <property type="match status" value="1"/>
</dbReference>
<sequence length="589" mass="67463">MRLWQWSIAVAICLVMVTEARLRRHHRKRRFVSSNFDEFYCGESAHAQSQFEEERESNSSKVSSVHSTQFNWGLDNTICIKLQNVVHVLKYERLEQRYPIENSYTFSVPLIDTNCKCHCYGFGTNDVCNVEKYADDRNCTTSSEFPTCYTKYHPAVEPLDCPVTSIPAKACCDIKLKPRDGRMFRAVKLQQPINDMIISHSIFANNSGKMMKVLGPDEFRINLLKGKEQFELTEYHRISVQLVASSPQQQLREGMYYFPEENHNDLREGKINEITESDLDKLGWYRRVGNDWQVATSGLLLRNAHKVVIKNCKGQVHMDQFSGTKNFVLRGTQYNDTYNERRVSDNNFVRSVKVDESSREITIVHEHGTAAQVSLKTDTRPNLTKSQSLLANFTGSITLDHDGNRMLNVTFFGVKGTVHIKMYVNDRKLIATFACTAQFGTSLKDDGSRISLPSTINQAQWVCILPDEQPTKSEICKWIPYEEKAMRTPRQEQSWSKGHSPCSQAECNSLKSGVSDLFPWIMNFDYFMAHGGDFTEWLKIGIHIVIAVGLLLLLILLFTKCLVPLACCSLSIPFKNRNKKKKKKNSSDY</sequence>
<reference evidence="7" key="1">
    <citation type="journal article" date="2007" name="Dev. Cell">
        <title>AFF-1, a FOS-1-regulated fusogen, mediates fusion of the anchor cell in C. elegans.</title>
        <authorList>
            <person name="Sapir A."/>
            <person name="Choi J."/>
            <person name="Leikina E."/>
            <person name="Avinoam O."/>
            <person name="Valansi C."/>
            <person name="Chernomordik L.V."/>
            <person name="Newman A.P."/>
            <person name="Podbilewicz B."/>
        </authorList>
    </citation>
    <scope>NUCLEOTIDE SEQUENCE [MRNA]</scope>
    <scope>FUNCTION</scope>
    <scope>SUBCELLULAR LOCATION</scope>
    <scope>DEVELOPMENTAL STAGE</scope>
    <scope>DISRUPTION PHENOTYPE</scope>
</reference>
<reference evidence="8" key="2">
    <citation type="journal article" date="1998" name="Science">
        <title>Genome sequence of the nematode C. elegans: a platform for investigating biology.</title>
        <authorList>
            <consortium name="The C. elegans sequencing consortium"/>
        </authorList>
    </citation>
    <scope>NUCLEOTIDE SEQUENCE [LARGE SCALE GENOMIC DNA]</scope>
    <source>
        <strain evidence="8">Bristol N2</strain>
    </source>
</reference>
<reference key="3">
    <citation type="journal article" date="2011" name="Development">
        <title>Glia delimit shape changes of sensory neuron receptive endings in C. elegans.</title>
        <authorList>
            <person name="Procko C."/>
            <person name="Lu Y."/>
            <person name="Shaham S."/>
        </authorList>
    </citation>
    <scope>FUNCTION</scope>
    <scope>SUBCELLULAR LOCATION</scope>
    <scope>TISSUE SPECIFICITY</scope>
    <scope>DISRUPTION PHENOTYPE</scope>
</reference>
<accession>G5EGL9</accession>
<name>AFF1_CAEEL</name>
<proteinExistence type="evidence at transcript level"/>
<feature type="signal peptide" evidence="1">
    <location>
        <begin position="1"/>
        <end position="20"/>
    </location>
</feature>
<feature type="chain" id="PRO_0000432857" description="Cell fusion protein aff-1" evidence="1">
    <location>
        <begin position="21"/>
        <end position="589"/>
    </location>
</feature>
<feature type="topological domain" description="Extracellular" evidence="5">
    <location>
        <begin position="21"/>
        <end position="537"/>
    </location>
</feature>
<feature type="transmembrane region" description="Helical" evidence="1">
    <location>
        <begin position="538"/>
        <end position="558"/>
    </location>
</feature>
<feature type="topological domain" description="Cytoplasmic" evidence="5">
    <location>
        <begin position="559"/>
        <end position="589"/>
    </location>
</feature>
<feature type="glycosylation site" description="N-linked (GlcNAc...) asparagine" evidence="2">
    <location>
        <position position="58"/>
    </location>
</feature>
<feature type="glycosylation site" description="N-linked (GlcNAc...) asparagine" evidence="2">
    <location>
        <position position="138"/>
    </location>
</feature>
<feature type="glycosylation site" description="N-linked (GlcNAc...) asparagine" evidence="2">
    <location>
        <position position="205"/>
    </location>
</feature>
<feature type="glycosylation site" description="N-linked (GlcNAc...) asparagine" evidence="2">
    <location>
        <position position="335"/>
    </location>
</feature>
<feature type="glycosylation site" description="N-linked (GlcNAc...) asparagine" evidence="2">
    <location>
        <position position="382"/>
    </location>
</feature>
<feature type="glycosylation site" description="N-linked (GlcNAc...) asparagine" evidence="2">
    <location>
        <position position="392"/>
    </location>
</feature>
<feature type="glycosylation site" description="N-linked (GlcNAc...) asparagine" evidence="2">
    <location>
        <position position="408"/>
    </location>
</feature>
<protein>
    <recommendedName>
        <fullName evidence="6">Cell fusion protein aff-1</fullName>
    </recommendedName>
    <alternativeName>
        <fullName evidence="7">Anchor cell fusion failure protein 1</fullName>
    </alternativeName>
</protein>